<sequence>MFLKVHEIAFLFGLLGNIVSFGVFLSPVPTFYGIYKKKSSKGFQSIPYICALASATLLLYYGIMKTHAYLIISINTFGCFIEISYLFLYILYAPREAKISTLKLIVICNIGGLGLLILLVNLLVPKQHRVSTVGWVCAAYSLAVFASPLSVMRKVIKTKSVEYMPFLLSLSLTLNAVMWFFYGLLIKDKFIAMPNILGFLFGVAQMILYMMYQGSTKTDLPTENQLANKTDVNEVPIVAVELPDVGSDNVEGSVRPMK</sequence>
<name>SWET9_ARATH</name>
<reference key="1">
    <citation type="journal article" date="1999" name="Nature">
        <title>Sequence and analysis of chromosome 2 of the plant Arabidopsis thaliana.</title>
        <authorList>
            <person name="Lin X."/>
            <person name="Kaul S."/>
            <person name="Rounsley S.D."/>
            <person name="Shea T.P."/>
            <person name="Benito M.-I."/>
            <person name="Town C.D."/>
            <person name="Fujii C.Y."/>
            <person name="Mason T.M."/>
            <person name="Bowman C.L."/>
            <person name="Barnstead M.E."/>
            <person name="Feldblyum T.V."/>
            <person name="Buell C.R."/>
            <person name="Ketchum K.A."/>
            <person name="Lee J.J."/>
            <person name="Ronning C.M."/>
            <person name="Koo H.L."/>
            <person name="Moffat K.S."/>
            <person name="Cronin L.A."/>
            <person name="Shen M."/>
            <person name="Pai G."/>
            <person name="Van Aken S."/>
            <person name="Umayam L."/>
            <person name="Tallon L.J."/>
            <person name="Gill J.E."/>
            <person name="Adams M.D."/>
            <person name="Carrera A.J."/>
            <person name="Creasy T.H."/>
            <person name="Goodman H.M."/>
            <person name="Somerville C.R."/>
            <person name="Copenhaver G.P."/>
            <person name="Preuss D."/>
            <person name="Nierman W.C."/>
            <person name="White O."/>
            <person name="Eisen J.A."/>
            <person name="Salzberg S.L."/>
            <person name="Fraser C.M."/>
            <person name="Venter J.C."/>
        </authorList>
    </citation>
    <scope>NUCLEOTIDE SEQUENCE [LARGE SCALE GENOMIC DNA]</scope>
    <source>
        <strain>cv. Columbia</strain>
    </source>
</reference>
<reference key="2">
    <citation type="journal article" date="2017" name="Plant J.">
        <title>Araport11: a complete reannotation of the Arabidopsis thaliana reference genome.</title>
        <authorList>
            <person name="Cheng C.Y."/>
            <person name="Krishnakumar V."/>
            <person name="Chan A.P."/>
            <person name="Thibaud-Nissen F."/>
            <person name="Schobel S."/>
            <person name="Town C.D."/>
        </authorList>
    </citation>
    <scope>GENOME REANNOTATION</scope>
    <source>
        <strain>cv. Columbia</strain>
    </source>
</reference>
<reference key="3">
    <citation type="submission" date="2002-03" db="EMBL/GenBank/DDBJ databases">
        <title>Full-length cDNA from Arabidopsis thaliana.</title>
        <authorList>
            <person name="Brover V.V."/>
            <person name="Troukhan M.E."/>
            <person name="Alexandrov N.A."/>
            <person name="Lu Y.-P."/>
            <person name="Flavell R.B."/>
            <person name="Feldmann K.A."/>
        </authorList>
    </citation>
    <scope>NUCLEOTIDE SEQUENCE [LARGE SCALE MRNA]</scope>
</reference>
<reference key="4">
    <citation type="journal article" date="2010" name="Nature">
        <title>Sugar transporters for intercellular exchange and nutrition of pathogens.</title>
        <authorList>
            <person name="Chen L.-Q."/>
            <person name="Hou B.-H."/>
            <person name="Lalonde S."/>
            <person name="Takanaga H."/>
            <person name="Hartung M.L."/>
            <person name="Qu X.-Q."/>
            <person name="Guo W.-J."/>
            <person name="Kim J.-G."/>
            <person name="Underwood W."/>
            <person name="Chaudhuri B."/>
            <person name="Chermak D."/>
            <person name="Antony G."/>
            <person name="White F.F."/>
            <person name="Somerville S.C."/>
            <person name="Mudgett M.B."/>
            <person name="Frommer W.B."/>
        </authorList>
    </citation>
    <scope>GENE FAMILY</scope>
    <scope>NOMENCLATURE</scope>
    <source>
        <strain>cv. Columbia</strain>
    </source>
</reference>
<reference key="5">
    <citation type="journal article" date="2013" name="Proc. Natl. Acad. Sci. U.S.A.">
        <title>Functional role of oligomerization for bacterial and plant SWEET sugar transporter family.</title>
        <authorList>
            <person name="Xuan Y.H."/>
            <person name="Hu Y.B."/>
            <person name="Chen L.-Q."/>
            <person name="Sosso D."/>
            <person name="Ducat D.C."/>
            <person name="Hou B.-H."/>
            <person name="Frommer W.B."/>
        </authorList>
    </citation>
    <scope>INTERACTION WITH SWEET1; SWEET5; SWEET8; SWEET11; SWEET13; SWEET16 AND SWEET17</scope>
</reference>
<reference key="6">
    <citation type="journal article" date="2014" name="Nature">
        <title>Nectar secretion requires sucrose phosphate synthases and the sugar transporter SWEET9.</title>
        <authorList>
            <person name="Lin I.W."/>
            <person name="Sosso D."/>
            <person name="Chen L.-Q."/>
            <person name="Gase K."/>
            <person name="Kim S.-G."/>
            <person name="Kessler D."/>
            <person name="Klinkenberg P.M."/>
            <person name="Gorder M.K."/>
            <person name="Hou B.-H."/>
            <person name="Qu X.-Q."/>
            <person name="Carter C.J."/>
            <person name="Baldwin I.T."/>
            <person name="Frommer W.B."/>
        </authorList>
    </citation>
    <scope>FUNCTION</scope>
    <scope>DISRUPTION PHENOTYPE</scope>
    <scope>TISSUE SPECIFICITY</scope>
    <scope>DEVELOPMENTAL STAGE</scope>
    <scope>SUBCELLULAR LOCATION</scope>
</reference>
<reference key="7">
    <citation type="journal article" date="2015" name="Curr. Opin. Plant Biol.">
        <title>SWEETs, transporters for intracellular and intercellular sugar translocation.</title>
        <authorList>
            <person name="Eom J.-S."/>
            <person name="Chen L.-Q."/>
            <person name="Sosso D."/>
            <person name="Julius B.T."/>
            <person name="Lin I.W."/>
            <person name="Qu X.-Q."/>
            <person name="Braun D.M."/>
            <person name="Frommer W.B."/>
        </authorList>
    </citation>
    <scope>REVIEW</scope>
    <source>
        <strain>cv. Columbia</strain>
    </source>
</reference>
<protein>
    <recommendedName>
        <fullName evidence="5">Bidirectional sugar transporter SWEET9</fullName>
        <shortName evidence="5">AtSWEET9</shortName>
    </recommendedName>
    <alternativeName>
        <fullName evidence="5">Protein SUGARS WILL EVENTUALLY BE EXPORTED TRANSPORTERS 9</fullName>
    </alternativeName>
</protein>
<feature type="chain" id="PRO_0000404109" description="Bidirectional sugar transporter SWEET9">
    <location>
        <begin position="1"/>
        <end position="258"/>
    </location>
</feature>
<feature type="topological domain" description="Extracellular" evidence="2">
    <location>
        <begin position="1"/>
        <end position="7"/>
    </location>
</feature>
<feature type="transmembrane region" description="Helical; Name=1" evidence="2">
    <location>
        <begin position="8"/>
        <end position="28"/>
    </location>
</feature>
<feature type="topological domain" description="Cytoplasmic" evidence="2">
    <location>
        <begin position="29"/>
        <end position="42"/>
    </location>
</feature>
<feature type="transmembrane region" description="Helical; Name=2" evidence="2">
    <location>
        <begin position="43"/>
        <end position="63"/>
    </location>
</feature>
<feature type="topological domain" description="Extracellular" evidence="2">
    <location>
        <begin position="64"/>
        <end position="69"/>
    </location>
</feature>
<feature type="transmembrane region" description="Helical; Name=3" evidence="2">
    <location>
        <begin position="70"/>
        <end position="90"/>
    </location>
</feature>
<feature type="topological domain" description="Cytoplasmic" evidence="2">
    <location>
        <begin position="91"/>
        <end position="103"/>
    </location>
</feature>
<feature type="transmembrane region" description="Helical; Name=4" evidence="2">
    <location>
        <begin position="104"/>
        <end position="124"/>
    </location>
</feature>
<feature type="topological domain" description="Extracellular" evidence="2">
    <location>
        <begin position="125"/>
        <end position="131"/>
    </location>
</feature>
<feature type="transmembrane region" description="Helical; Name=5" evidence="2">
    <location>
        <begin position="132"/>
        <end position="152"/>
    </location>
</feature>
<feature type="topological domain" description="Cytoplasmic" evidence="2">
    <location>
        <begin position="153"/>
        <end position="165"/>
    </location>
</feature>
<feature type="transmembrane region" description="Helical; Name=6" evidence="2">
    <location>
        <begin position="166"/>
        <end position="186"/>
    </location>
</feature>
<feature type="topological domain" description="Extracellular" evidence="2">
    <location>
        <begin position="187"/>
        <end position="189"/>
    </location>
</feature>
<feature type="transmembrane region" description="Helical; Name=7" evidence="2">
    <location>
        <begin position="190"/>
        <end position="210"/>
    </location>
</feature>
<feature type="topological domain" description="Cytoplasmic" evidence="2">
    <location>
        <begin position="211"/>
        <end position="258"/>
    </location>
</feature>
<feature type="domain" description="MtN3/slv 1">
    <location>
        <begin position="10"/>
        <end position="96"/>
    </location>
</feature>
<feature type="domain" description="MtN3/slv 2">
    <location>
        <begin position="132"/>
        <end position="216"/>
    </location>
</feature>
<feature type="sequence conflict" description="In Ref. 3; AAM63257." evidence="7" ref="3">
    <original>K</original>
    <variation>Q</variation>
    <location>
        <position position="4"/>
    </location>
</feature>
<organism>
    <name type="scientific">Arabidopsis thaliana</name>
    <name type="common">Mouse-ear cress</name>
    <dbReference type="NCBI Taxonomy" id="3702"/>
    <lineage>
        <taxon>Eukaryota</taxon>
        <taxon>Viridiplantae</taxon>
        <taxon>Streptophyta</taxon>
        <taxon>Embryophyta</taxon>
        <taxon>Tracheophyta</taxon>
        <taxon>Spermatophyta</taxon>
        <taxon>Magnoliopsida</taxon>
        <taxon>eudicotyledons</taxon>
        <taxon>Gunneridae</taxon>
        <taxon>Pentapetalae</taxon>
        <taxon>rosids</taxon>
        <taxon>malvids</taxon>
        <taxon>Brassicales</taxon>
        <taxon>Brassicaceae</taxon>
        <taxon>Camelineae</taxon>
        <taxon>Arabidopsis</taxon>
    </lineage>
</organism>
<comment type="function">
    <text evidence="1 4 6">Mediates both low-affinity uptake and efflux of sugar across the plasma membrane (By similarity). Nectary-specific sugar transporter required for nectar production by mediating the secretion of sucrose from the nectary parenchyma to the extracellular space.</text>
</comment>
<comment type="subunit">
    <text evidence="3">Forms heterooligomers with SWEET1, SWEET5, SWEET8, SWEET11, SWEET13, SWEET16 and SWEET17.</text>
</comment>
<comment type="subcellular location">
    <subcellularLocation>
        <location evidence="4">Cell membrane</location>
        <topology evidence="4">Multi-pass membrane protein</topology>
    </subcellularLocation>
    <subcellularLocation>
        <location evidence="4">Cytoplasmic vesicle membrane</location>
    </subcellularLocation>
    <subcellularLocation>
        <location evidence="4">Golgi apparatus</location>
        <location evidence="4">trans-Golgi network membrane</location>
    </subcellularLocation>
</comment>
<comment type="tissue specificity">
    <text evidence="4">Specifically expressed in nectaries, mostly in the lower half of nectary parenchyma.</text>
</comment>
<comment type="developmental stage">
    <text evidence="4">Accumulates progressively in floral nectaries during maturation, reaching highest levels during maximal nectar secretion.</text>
</comment>
<comment type="disruption phenotype">
    <text evidence="4">In sweet9-1, reduced nectar production accompanied by starch accumulation in nectaries.</text>
</comment>
<comment type="similarity">
    <text evidence="7">Belongs to the SWEET sugar transporter family.</text>
</comment>
<gene>
    <name evidence="5" type="primary">SWEET9</name>
    <name type="ordered locus">At2g39060</name>
    <name type="ORF">T7F6.23</name>
</gene>
<evidence type="ECO:0000250" key="1">
    <source>
        <dbReference type="UniProtKB" id="Q8L9J7"/>
    </source>
</evidence>
<evidence type="ECO:0000255" key="2"/>
<evidence type="ECO:0000269" key="3">
    <source>
    </source>
</evidence>
<evidence type="ECO:0000269" key="4">
    <source>
    </source>
</evidence>
<evidence type="ECO:0000303" key="5">
    <source>
    </source>
</evidence>
<evidence type="ECO:0000303" key="6">
    <source>
    </source>
</evidence>
<evidence type="ECO:0000305" key="7"/>
<accession>Q9ZV02</accession>
<accession>Q8LDE6</accession>
<keyword id="KW-1003">Cell membrane</keyword>
<keyword id="KW-0968">Cytoplasmic vesicle</keyword>
<keyword id="KW-0333">Golgi apparatus</keyword>
<keyword id="KW-0472">Membrane</keyword>
<keyword id="KW-1185">Reference proteome</keyword>
<keyword id="KW-0677">Repeat</keyword>
<keyword id="KW-0762">Sugar transport</keyword>
<keyword id="KW-0812">Transmembrane</keyword>
<keyword id="KW-1133">Transmembrane helix</keyword>
<keyword id="KW-0813">Transport</keyword>
<dbReference type="EMBL" id="AC005770">
    <property type="protein sequence ID" value="AAC79616.1"/>
    <property type="molecule type" value="Genomic_DNA"/>
</dbReference>
<dbReference type="EMBL" id="CP002685">
    <property type="protein sequence ID" value="AEC09631.1"/>
    <property type="molecule type" value="Genomic_DNA"/>
</dbReference>
<dbReference type="EMBL" id="AY086047">
    <property type="protein sequence ID" value="AAM63257.1"/>
    <property type="molecule type" value="mRNA"/>
</dbReference>
<dbReference type="PIR" id="F84812">
    <property type="entry name" value="F84812"/>
</dbReference>
<dbReference type="RefSeq" id="NP_181439.1">
    <property type="nucleotide sequence ID" value="NM_129463.4"/>
</dbReference>
<dbReference type="SMR" id="Q9ZV02"/>
<dbReference type="BioGRID" id="3831">
    <property type="interactions" value="26"/>
</dbReference>
<dbReference type="FunCoup" id="Q9ZV02">
    <property type="interactions" value="715"/>
</dbReference>
<dbReference type="IntAct" id="Q9ZV02">
    <property type="interactions" value="19"/>
</dbReference>
<dbReference type="STRING" id="3702.Q9ZV02"/>
<dbReference type="TCDB" id="2.A.123.1.24">
    <property type="family name" value="the sweet, pq-loop, saliva, mtn3 (sweet) family"/>
</dbReference>
<dbReference type="PaxDb" id="3702-AT2G39060.1"/>
<dbReference type="ProteomicsDB" id="226536"/>
<dbReference type="EnsemblPlants" id="AT2G39060.1">
    <property type="protein sequence ID" value="AT2G39060.1"/>
    <property type="gene ID" value="AT2G39060"/>
</dbReference>
<dbReference type="GeneID" id="818492"/>
<dbReference type="Gramene" id="AT2G39060.1">
    <property type="protein sequence ID" value="AT2G39060.1"/>
    <property type="gene ID" value="AT2G39060"/>
</dbReference>
<dbReference type="KEGG" id="ath:AT2G39060"/>
<dbReference type="Araport" id="AT2G39060"/>
<dbReference type="TAIR" id="AT2G39060">
    <property type="gene designation" value="SWEET9"/>
</dbReference>
<dbReference type="eggNOG" id="KOG1623">
    <property type="taxonomic scope" value="Eukaryota"/>
</dbReference>
<dbReference type="HOGENOM" id="CLU_048643_4_0_1"/>
<dbReference type="InParanoid" id="Q9ZV02"/>
<dbReference type="OMA" id="FIMLPNV"/>
<dbReference type="PhylomeDB" id="Q9ZV02"/>
<dbReference type="PRO" id="PR:Q9ZV02"/>
<dbReference type="Proteomes" id="UP000006548">
    <property type="component" value="Chromosome 2"/>
</dbReference>
<dbReference type="ExpressionAtlas" id="Q9ZV02">
    <property type="expression patterns" value="baseline and differential"/>
</dbReference>
<dbReference type="GO" id="GO:0030659">
    <property type="term" value="C:cytoplasmic vesicle membrane"/>
    <property type="evidence" value="ECO:0007669"/>
    <property type="project" value="UniProtKB-SubCell"/>
</dbReference>
<dbReference type="GO" id="GO:0005886">
    <property type="term" value="C:plasma membrane"/>
    <property type="evidence" value="ECO:0000314"/>
    <property type="project" value="UniProtKB"/>
</dbReference>
<dbReference type="GO" id="GO:0032588">
    <property type="term" value="C:trans-Golgi network membrane"/>
    <property type="evidence" value="ECO:0000314"/>
    <property type="project" value="UniProtKB"/>
</dbReference>
<dbReference type="GO" id="GO:0012506">
    <property type="term" value="C:vesicle membrane"/>
    <property type="evidence" value="ECO:0000314"/>
    <property type="project" value="UniProtKB"/>
</dbReference>
<dbReference type="GO" id="GO:0008515">
    <property type="term" value="F:sucrose transmembrane transporter activity"/>
    <property type="evidence" value="ECO:0000314"/>
    <property type="project" value="UniProtKB"/>
</dbReference>
<dbReference type="GO" id="GO:0051119">
    <property type="term" value="F:sugar transmembrane transporter activity"/>
    <property type="evidence" value="ECO:0000250"/>
    <property type="project" value="UniProtKB"/>
</dbReference>
<dbReference type="GO" id="GO:0071836">
    <property type="term" value="P:nectar secretion"/>
    <property type="evidence" value="ECO:0000315"/>
    <property type="project" value="UniProtKB"/>
</dbReference>
<dbReference type="FunFam" id="1.20.1280.290:FF:000001">
    <property type="entry name" value="Bidirectional sugar transporter SWEET"/>
    <property type="match status" value="1"/>
</dbReference>
<dbReference type="FunFam" id="1.20.1280.290:FF:000003">
    <property type="entry name" value="Bidirectional sugar transporter SWEET"/>
    <property type="match status" value="1"/>
</dbReference>
<dbReference type="Gene3D" id="1.20.1280.290">
    <property type="match status" value="2"/>
</dbReference>
<dbReference type="InterPro" id="IPR047664">
    <property type="entry name" value="SWEET"/>
</dbReference>
<dbReference type="InterPro" id="IPR004316">
    <property type="entry name" value="SWEET_rpt"/>
</dbReference>
<dbReference type="PANTHER" id="PTHR10791:SF134">
    <property type="entry name" value="BIDIRECTIONAL SUGAR TRANSPORTER SWEET9"/>
    <property type="match status" value="1"/>
</dbReference>
<dbReference type="PANTHER" id="PTHR10791">
    <property type="entry name" value="RAG1-ACTIVATING PROTEIN 1"/>
    <property type="match status" value="1"/>
</dbReference>
<dbReference type="Pfam" id="PF03083">
    <property type="entry name" value="MtN3_slv"/>
    <property type="match status" value="2"/>
</dbReference>
<proteinExistence type="evidence at protein level"/>